<reference key="1">
    <citation type="journal article" date="1997" name="Nature">
        <title>The nucleotide sequence of Saccharomyces cerevisiae chromosome XIII.</title>
        <authorList>
            <person name="Bowman S."/>
            <person name="Churcher C.M."/>
            <person name="Badcock K."/>
            <person name="Brown D."/>
            <person name="Chillingworth T."/>
            <person name="Connor R."/>
            <person name="Dedman K."/>
            <person name="Devlin K."/>
            <person name="Gentles S."/>
            <person name="Hamlin N."/>
            <person name="Hunt S."/>
            <person name="Jagels K."/>
            <person name="Lye G."/>
            <person name="Moule S."/>
            <person name="Odell C."/>
            <person name="Pearson D."/>
            <person name="Rajandream M.A."/>
            <person name="Rice P."/>
            <person name="Skelton J."/>
            <person name="Walsh S.V."/>
            <person name="Whitehead S."/>
            <person name="Barrell B.G."/>
        </authorList>
    </citation>
    <scope>NUCLEOTIDE SEQUENCE [LARGE SCALE GENOMIC DNA]</scope>
    <source>
        <strain>ATCC 204508 / S288c</strain>
    </source>
</reference>
<reference key="2">
    <citation type="journal article" date="2014" name="G3 (Bethesda)">
        <title>The reference genome sequence of Saccharomyces cerevisiae: Then and now.</title>
        <authorList>
            <person name="Engel S.R."/>
            <person name="Dietrich F.S."/>
            <person name="Fisk D.G."/>
            <person name="Binkley G."/>
            <person name="Balakrishnan R."/>
            <person name="Costanzo M.C."/>
            <person name="Dwight S.S."/>
            <person name="Hitz B.C."/>
            <person name="Karra K."/>
            <person name="Nash R.S."/>
            <person name="Weng S."/>
            <person name="Wong E.D."/>
            <person name="Lloyd P."/>
            <person name="Skrzypek M.S."/>
            <person name="Miyasato S.R."/>
            <person name="Simison M."/>
            <person name="Cherry J.M."/>
        </authorList>
    </citation>
    <scope>GENOME REANNOTATION</scope>
    <source>
        <strain>ATCC 204508 / S288c</strain>
    </source>
</reference>
<reference key="3">
    <citation type="journal article" date="2002" name="Nat. Biotechnol.">
        <title>An integrated approach for finding overlooked genes in yeast.</title>
        <authorList>
            <person name="Kumar A."/>
            <person name="Harrison P.M."/>
            <person name="Cheung K.-H."/>
            <person name="Lan N."/>
            <person name="Echols N."/>
            <person name="Bertone P."/>
            <person name="Miller P."/>
            <person name="Gerstein M.B."/>
            <person name="Snyder M."/>
        </authorList>
    </citation>
    <scope>NUCLEOTIDE SEQUENCE [GENOMIC DNA]</scope>
</reference>
<name>YM272_YEAST</name>
<evidence type="ECO:0000255" key="1"/>
<protein>
    <recommendedName>
        <fullName>Uncharacterized protein YMR272W-B</fullName>
    </recommendedName>
</protein>
<gene>
    <name type="ordered locus">YMR272W-B</name>
</gene>
<organism>
    <name type="scientific">Saccharomyces cerevisiae (strain ATCC 204508 / S288c)</name>
    <name type="common">Baker's yeast</name>
    <dbReference type="NCBI Taxonomy" id="559292"/>
    <lineage>
        <taxon>Eukaryota</taxon>
        <taxon>Fungi</taxon>
        <taxon>Dikarya</taxon>
        <taxon>Ascomycota</taxon>
        <taxon>Saccharomycotina</taxon>
        <taxon>Saccharomycetes</taxon>
        <taxon>Saccharomycetales</taxon>
        <taxon>Saccharomycetaceae</taxon>
        <taxon>Saccharomyces</taxon>
    </lineage>
</organism>
<feature type="signal peptide" evidence="1">
    <location>
        <begin position="1"/>
        <end position="18"/>
    </location>
</feature>
<feature type="chain" id="PRO_0000247795" description="Uncharacterized protein YMR272W-B">
    <location>
        <begin position="19"/>
        <end position="35"/>
    </location>
</feature>
<keyword id="KW-1185">Reference proteome</keyword>
<keyword id="KW-0732">Signal</keyword>
<proteinExistence type="inferred from homology"/>
<dbReference type="EMBL" id="Z49260">
    <property type="status" value="NOT_ANNOTATED_CDS"/>
    <property type="molecule type" value="Genomic_DNA"/>
</dbReference>
<dbReference type="EMBL" id="AF479910">
    <property type="protein sequence ID" value="AAL79223.1"/>
    <property type="molecule type" value="Genomic_DNA"/>
</dbReference>
<dbReference type="EMBL" id="BK006946">
    <property type="protein sequence ID" value="DAA10173.1"/>
    <property type="molecule type" value="Genomic_DNA"/>
</dbReference>
<dbReference type="RefSeq" id="NP_878149.1">
    <property type="nucleotide sequence ID" value="NM_001184617.1"/>
</dbReference>
<dbReference type="BioGRID" id="37049">
    <property type="interactions" value="26"/>
</dbReference>
<dbReference type="FunCoup" id="Q8TGS5">
    <property type="interactions" value="9"/>
</dbReference>
<dbReference type="STRING" id="4932.YMR272W-B"/>
<dbReference type="PaxDb" id="4932-YMR272W-B"/>
<dbReference type="EnsemblFungi" id="YMR272W-B_mRNA">
    <property type="protein sequence ID" value="YMR272W-B"/>
    <property type="gene ID" value="YMR272W-B"/>
</dbReference>
<dbReference type="GeneID" id="1466507"/>
<dbReference type="KEGG" id="sce:YMR272W-B"/>
<dbReference type="AGR" id="SGD:S000028696"/>
<dbReference type="SGD" id="S000028696">
    <property type="gene designation" value="YMR272W-B"/>
</dbReference>
<dbReference type="VEuPathDB" id="FungiDB:YMR272W-B"/>
<dbReference type="HOGENOM" id="CLU_3368735_0_0_1"/>
<dbReference type="InParanoid" id="Q8TGS5"/>
<dbReference type="BioCyc" id="YEAST:G3O-33034-MONOMER"/>
<dbReference type="BioGRID-ORCS" id="1466507">
    <property type="hits" value="6 hits in 10 CRISPR screens"/>
</dbReference>
<dbReference type="PRO" id="PR:Q8TGS5"/>
<dbReference type="Proteomes" id="UP000002311">
    <property type="component" value="Chromosome XIII"/>
</dbReference>
<dbReference type="GO" id="GO:0000324">
    <property type="term" value="C:fungal-type vacuole"/>
    <property type="evidence" value="ECO:0007005"/>
    <property type="project" value="SGD"/>
</dbReference>
<accession>Q8TGS5</accession>
<accession>D6W099</accession>
<sequence length="35" mass="4109">MRSLVFVQLSLLSWEIFCGERSFVSMKAIFSCMYV</sequence>